<evidence type="ECO:0000255" key="1"/>
<evidence type="ECO:0000255" key="2">
    <source>
        <dbReference type="PROSITE-ProRule" id="PRU00114"/>
    </source>
</evidence>
<evidence type="ECO:0000255" key="3">
    <source>
        <dbReference type="PROSITE-ProRule" id="PRU00204"/>
    </source>
</evidence>
<evidence type="ECO:0000269" key="4">
    <source>
    </source>
</evidence>
<evidence type="ECO:0000303" key="5">
    <source>
    </source>
</evidence>
<evidence type="ECO:0000305" key="6"/>
<feature type="signal peptide" evidence="1">
    <location>
        <begin position="1"/>
        <end position="16"/>
    </location>
</feature>
<feature type="chain" id="PRO_0000015460" description="X-linked interleukin-1 receptor accessory protein-like 2">
    <location>
        <begin position="17"/>
        <end position="686"/>
    </location>
</feature>
<feature type="topological domain" description="Extracellular" evidence="1">
    <location>
        <begin position="17"/>
        <end position="354"/>
    </location>
</feature>
<feature type="transmembrane region" description="Helical" evidence="1">
    <location>
        <begin position="355"/>
        <end position="375"/>
    </location>
</feature>
<feature type="topological domain" description="Cytoplasmic" evidence="1">
    <location>
        <begin position="376"/>
        <end position="686"/>
    </location>
</feature>
<feature type="domain" description="Ig-like C2-type 1">
    <location>
        <begin position="32"/>
        <end position="132"/>
    </location>
</feature>
<feature type="domain" description="Ig-like C2-type 2">
    <location>
        <begin position="141"/>
        <end position="232"/>
    </location>
</feature>
<feature type="domain" description="Ig-like C2-type 3">
    <location>
        <begin position="239"/>
        <end position="347"/>
    </location>
</feature>
<feature type="domain" description="TIR" evidence="3">
    <location>
        <begin position="400"/>
        <end position="556"/>
    </location>
</feature>
<feature type="active site" evidence="3">
    <location>
        <position position="488"/>
    </location>
</feature>
<feature type="glycosylation site" description="N-linked (GlcNAc...) asparagine" evidence="1">
    <location>
        <position position="63"/>
    </location>
</feature>
<feature type="glycosylation site" description="N-linked (GlcNAc...) asparagine" evidence="1">
    <location>
        <position position="120"/>
    </location>
</feature>
<feature type="glycosylation site" description="N-linked (GlcNAc...) asparagine" evidence="1">
    <location>
        <position position="136"/>
    </location>
</feature>
<feature type="glycosylation site" description="N-linked (GlcNAc...) asparagine" evidence="1">
    <location>
        <position position="211"/>
    </location>
</feature>
<feature type="glycosylation site" description="N-linked (GlcNAc...) asparagine" evidence="1">
    <location>
        <position position="328"/>
    </location>
</feature>
<feature type="disulfide bond" evidence="2">
    <location>
        <begin position="53"/>
        <end position="116"/>
    </location>
</feature>
<feature type="disulfide bond" evidence="2">
    <location>
        <begin position="162"/>
        <end position="214"/>
    </location>
</feature>
<feature type="disulfide bond" evidence="2">
    <location>
        <begin position="265"/>
        <end position="331"/>
    </location>
</feature>
<feature type="splice variant" id="VSP_008056" description="In isoform 2." evidence="5">
    <original>DLIYK</original>
    <variation>GILFS</variation>
    <location>
        <begin position="350"/>
        <end position="354"/>
    </location>
</feature>
<feature type="splice variant" id="VSP_008057" description="In isoform 2." evidence="5">
    <location>
        <begin position="355"/>
        <end position="686"/>
    </location>
</feature>
<comment type="catalytic activity">
    <reaction evidence="3">
        <text>NAD(+) + H2O = ADP-D-ribose + nicotinamide + H(+)</text>
        <dbReference type="Rhea" id="RHEA:16301"/>
        <dbReference type="ChEBI" id="CHEBI:15377"/>
        <dbReference type="ChEBI" id="CHEBI:15378"/>
        <dbReference type="ChEBI" id="CHEBI:17154"/>
        <dbReference type="ChEBI" id="CHEBI:57540"/>
        <dbReference type="ChEBI" id="CHEBI:57967"/>
        <dbReference type="EC" id="3.2.2.6"/>
    </reaction>
    <physiologicalReaction direction="left-to-right" evidence="3">
        <dbReference type="Rhea" id="RHEA:16302"/>
    </physiologicalReaction>
</comment>
<comment type="subcellular location">
    <subcellularLocation>
        <location>Membrane</location>
        <topology>Single-pass type I membrane protein</topology>
    </subcellularLocation>
</comment>
<comment type="alternative products">
    <event type="alternative splicing"/>
    <isoform>
        <id>Q9ERS6-1</id>
        <name>1</name>
        <sequence type="displayed"/>
    </isoform>
    <isoform>
        <id>Q9ERS6-2</id>
        <name>2</name>
        <sequence type="described" ref="VSP_008056 VSP_008057"/>
    </isoform>
</comment>
<comment type="tissue specificity">
    <text evidence="4">Detected in fetal brain after day 12.5, in particular in parts of the diencephalon and in the basal plate of the spinal cord. In postnatal brain detected in cerebral cortex, olfactory bulb, in the CA1 region of the hippocampus and in Purkinje cells of the Xth cerebellar lobule.</text>
</comment>
<comment type="domain">
    <text evidence="3">The TIR domain mediates NAD(+) hydrolase (NADase) activity. Self-association of TIR domains is required for NADase activity.</text>
</comment>
<comment type="miscellaneous">
    <molecule>Isoform 2</molecule>
    <text evidence="6">May be due to an intron retention.</text>
</comment>
<comment type="similarity">
    <text evidence="6">Belongs to the interleukin-1 receptor family.</text>
</comment>
<accession>Q9ERS6</accession>
<accession>Q9ER66</accession>
<organism>
    <name type="scientific">Mus musculus</name>
    <name type="common">Mouse</name>
    <dbReference type="NCBI Taxonomy" id="10090"/>
    <lineage>
        <taxon>Eukaryota</taxon>
        <taxon>Metazoa</taxon>
        <taxon>Chordata</taxon>
        <taxon>Craniata</taxon>
        <taxon>Vertebrata</taxon>
        <taxon>Euteleostomi</taxon>
        <taxon>Mammalia</taxon>
        <taxon>Eutheria</taxon>
        <taxon>Euarchontoglires</taxon>
        <taxon>Glires</taxon>
        <taxon>Rodentia</taxon>
        <taxon>Myomorpha</taxon>
        <taxon>Muroidea</taxon>
        <taxon>Muridae</taxon>
        <taxon>Murinae</taxon>
        <taxon>Mus</taxon>
        <taxon>Mus</taxon>
    </lineage>
</organism>
<reference key="1">
    <citation type="journal article" date="2000" name="J. Biol. Chem.">
        <title>Identification and characterization of two members of a novel class of the interleukin-1 receptor (IL-1R) family. Delineation of a new class of IL-1R-related proteins based on signaling.</title>
        <authorList>
            <person name="Born T.L."/>
            <person name="Smith D.E."/>
            <person name="Garka K.E."/>
            <person name="Renshaw B.R."/>
            <person name="Bertles J.S."/>
            <person name="Sims J.E."/>
        </authorList>
    </citation>
    <scope>NUCLEOTIDE SEQUENCE [MRNA] (ISOFORM 1)</scope>
    <source>
        <tissue>Brain</tissue>
        <tissue>Liver</tissue>
    </source>
</reference>
<reference key="2">
    <citation type="journal article" date="2001" name="Gene">
        <title>IL1RAPL2 maps to Xq22 and is specifically expressed in the central nervous system.</title>
        <authorList>
            <person name="Ferrante M.I."/>
            <person name="Ghiani M."/>
            <person name="Bulfone A."/>
            <person name="Franco B."/>
        </authorList>
    </citation>
    <scope>NUCLEOTIDE SEQUENCE [MRNA] (ISOFORM 2)</scope>
    <scope>TISSUE SPECIFICITY</scope>
    <source>
        <tissue>Brain</tissue>
    </source>
</reference>
<dbReference type="EC" id="3.2.2.6" evidence="3"/>
<dbReference type="EMBL" id="AF284437">
    <property type="protein sequence ID" value="AAG21371.1"/>
    <property type="molecule type" value="mRNA"/>
</dbReference>
<dbReference type="EMBL" id="AJ277831">
    <property type="protein sequence ID" value="CAC10559.1"/>
    <property type="molecule type" value="mRNA"/>
</dbReference>
<dbReference type="CCDS" id="CCDS30429.1">
    <molecule id="Q9ERS6-1"/>
</dbReference>
<dbReference type="RefSeq" id="NP_109613.1">
    <molecule id="Q9ERS6-1"/>
    <property type="nucleotide sequence ID" value="NM_030688.2"/>
</dbReference>
<dbReference type="SMR" id="Q9ERS6"/>
<dbReference type="FunCoup" id="Q9ERS6">
    <property type="interactions" value="6"/>
</dbReference>
<dbReference type="STRING" id="10090.ENSMUSP00000108686"/>
<dbReference type="GlyCosmos" id="Q9ERS6">
    <property type="glycosylation" value="5 sites, No reported glycans"/>
</dbReference>
<dbReference type="GlyGen" id="Q9ERS6">
    <property type="glycosylation" value="5 sites, 2 N-linked glycans (2 sites)"/>
</dbReference>
<dbReference type="iPTMnet" id="Q9ERS6"/>
<dbReference type="PhosphoSitePlus" id="Q9ERS6"/>
<dbReference type="PaxDb" id="10090-ENSMUSP00000108686"/>
<dbReference type="ProteomicsDB" id="268997">
    <molecule id="Q9ERS6-1"/>
</dbReference>
<dbReference type="ProteomicsDB" id="268998">
    <molecule id="Q9ERS6-2"/>
</dbReference>
<dbReference type="Antibodypedia" id="35255">
    <property type="antibodies" value="278 antibodies from 30 providers"/>
</dbReference>
<dbReference type="DNASU" id="60367"/>
<dbReference type="Ensembl" id="ENSMUST00000075471.4">
    <molecule id="Q9ERS6-1"/>
    <property type="protein sequence ID" value="ENSMUSP00000074917.4"/>
    <property type="gene ID" value="ENSMUSG00000059203.11"/>
</dbReference>
<dbReference type="Ensembl" id="ENSMUST00000113063.8">
    <molecule id="Q9ERS6-1"/>
    <property type="protein sequence ID" value="ENSMUSP00000108686.2"/>
    <property type="gene ID" value="ENSMUSG00000059203.11"/>
</dbReference>
<dbReference type="GeneID" id="60367"/>
<dbReference type="KEGG" id="mmu:60367"/>
<dbReference type="UCSC" id="uc009ujt.1">
    <molecule id="Q9ERS6-2"/>
    <property type="organism name" value="mouse"/>
</dbReference>
<dbReference type="UCSC" id="uc009ujv.1">
    <molecule id="Q9ERS6-1"/>
    <property type="organism name" value="mouse"/>
</dbReference>
<dbReference type="AGR" id="MGI:1913106"/>
<dbReference type="CTD" id="26280"/>
<dbReference type="MGI" id="MGI:1913106">
    <property type="gene designation" value="Il1rapl2"/>
</dbReference>
<dbReference type="VEuPathDB" id="HostDB:ENSMUSG00000059203"/>
<dbReference type="eggNOG" id="KOG3971">
    <property type="taxonomic scope" value="Eukaryota"/>
</dbReference>
<dbReference type="GeneTree" id="ENSGT01090000260076"/>
<dbReference type="HOGENOM" id="CLU_025552_0_1_1"/>
<dbReference type="InParanoid" id="Q9ERS6"/>
<dbReference type="OMA" id="QEPEVVW"/>
<dbReference type="OrthoDB" id="9925886at2759"/>
<dbReference type="PhylomeDB" id="Q9ERS6"/>
<dbReference type="TreeFam" id="TF333913"/>
<dbReference type="Reactome" id="R-MMU-388844">
    <property type="pathway name" value="Receptor-type tyrosine-protein phosphatases"/>
</dbReference>
<dbReference type="BioGRID-ORCS" id="60367">
    <property type="hits" value="2 hits in 61 CRISPR screens"/>
</dbReference>
<dbReference type="ChiTaRS" id="Il1rapl2">
    <property type="organism name" value="mouse"/>
</dbReference>
<dbReference type="PRO" id="PR:Q9ERS6"/>
<dbReference type="Proteomes" id="UP000000589">
    <property type="component" value="Chromosome X"/>
</dbReference>
<dbReference type="RNAct" id="Q9ERS6">
    <property type="molecule type" value="protein"/>
</dbReference>
<dbReference type="Bgee" id="ENSMUSG00000059203">
    <property type="expression patterns" value="Expressed in regional part of spinal cord and 47 other cell types or tissues"/>
</dbReference>
<dbReference type="ExpressionAtlas" id="Q9ERS6">
    <property type="expression patterns" value="baseline and differential"/>
</dbReference>
<dbReference type="GO" id="GO:0098978">
    <property type="term" value="C:glutamatergic synapse"/>
    <property type="evidence" value="ECO:0007669"/>
    <property type="project" value="Ensembl"/>
</dbReference>
<dbReference type="GO" id="GO:0016020">
    <property type="term" value="C:membrane"/>
    <property type="evidence" value="ECO:0007669"/>
    <property type="project" value="UniProtKB-SubCell"/>
</dbReference>
<dbReference type="GO" id="GO:0004910">
    <property type="term" value="F:interleukin-1, type II, blocking receptor activity"/>
    <property type="evidence" value="ECO:0007669"/>
    <property type="project" value="InterPro"/>
</dbReference>
<dbReference type="GO" id="GO:0061809">
    <property type="term" value="F:NAD+ nucleosidase activity, cyclic ADP-ribose generating"/>
    <property type="evidence" value="ECO:0007669"/>
    <property type="project" value="UniProtKB-EC"/>
</dbReference>
<dbReference type="GO" id="GO:1905606">
    <property type="term" value="P:regulation of presynapse assembly"/>
    <property type="evidence" value="ECO:0007669"/>
    <property type="project" value="Ensembl"/>
</dbReference>
<dbReference type="CDD" id="cd00096">
    <property type="entry name" value="Ig"/>
    <property type="match status" value="1"/>
</dbReference>
<dbReference type="CDD" id="cd05757">
    <property type="entry name" value="Ig2_IL1R-like"/>
    <property type="match status" value="1"/>
</dbReference>
<dbReference type="FunFam" id="2.60.40.10:FF:000188">
    <property type="entry name" value="Interleukin-1 receptor accessory protein-like 1"/>
    <property type="match status" value="1"/>
</dbReference>
<dbReference type="FunFam" id="2.60.40.10:FF:000284">
    <property type="entry name" value="interleukin-1 receptor accessory protein-like 1"/>
    <property type="match status" value="1"/>
</dbReference>
<dbReference type="FunFam" id="2.60.40.10:FF:000220">
    <property type="entry name" value="X-linked interleukin-1 receptor accessory protein-like 1"/>
    <property type="match status" value="1"/>
</dbReference>
<dbReference type="FunFam" id="3.40.50.10140:FF:000004">
    <property type="entry name" value="X-linked interleukin-1 receptor accessory protein-like 1"/>
    <property type="match status" value="1"/>
</dbReference>
<dbReference type="Gene3D" id="2.60.40.10">
    <property type="entry name" value="Immunoglobulins"/>
    <property type="match status" value="3"/>
</dbReference>
<dbReference type="Gene3D" id="3.40.50.10140">
    <property type="entry name" value="Toll/interleukin-1 receptor homology (TIR) domain"/>
    <property type="match status" value="1"/>
</dbReference>
<dbReference type="InterPro" id="IPR007110">
    <property type="entry name" value="Ig-like_dom"/>
</dbReference>
<dbReference type="InterPro" id="IPR036179">
    <property type="entry name" value="Ig-like_dom_sf"/>
</dbReference>
<dbReference type="InterPro" id="IPR013783">
    <property type="entry name" value="Ig-like_fold"/>
</dbReference>
<dbReference type="InterPro" id="IPR013098">
    <property type="entry name" value="Ig_I-set"/>
</dbReference>
<dbReference type="InterPro" id="IPR003599">
    <property type="entry name" value="Ig_sub"/>
</dbReference>
<dbReference type="InterPro" id="IPR003598">
    <property type="entry name" value="Ig_sub2"/>
</dbReference>
<dbReference type="InterPro" id="IPR015621">
    <property type="entry name" value="IL-1_rcpt_fam"/>
</dbReference>
<dbReference type="InterPro" id="IPR004077">
    <property type="entry name" value="IL-1_rcpt_II-typ"/>
</dbReference>
<dbReference type="InterPro" id="IPR000157">
    <property type="entry name" value="TIR_dom"/>
</dbReference>
<dbReference type="InterPro" id="IPR035897">
    <property type="entry name" value="Toll_tir_struct_dom_sf"/>
</dbReference>
<dbReference type="PANTHER" id="PTHR11890">
    <property type="entry name" value="INTERLEUKIN-1 RECEPTOR FAMILY MEMBER"/>
    <property type="match status" value="1"/>
</dbReference>
<dbReference type="PANTHER" id="PTHR11890:SF10">
    <property type="entry name" value="X-LINKED INTERLEUKIN-1 RECEPTOR ACCESSORY PROTEIN-LIKE 2"/>
    <property type="match status" value="1"/>
</dbReference>
<dbReference type="Pfam" id="PF07679">
    <property type="entry name" value="I-set"/>
    <property type="match status" value="1"/>
</dbReference>
<dbReference type="Pfam" id="PF13895">
    <property type="entry name" value="Ig_2"/>
    <property type="match status" value="1"/>
</dbReference>
<dbReference type="Pfam" id="PF01582">
    <property type="entry name" value="TIR"/>
    <property type="match status" value="1"/>
</dbReference>
<dbReference type="PRINTS" id="PR01539">
    <property type="entry name" value="INTRLEUKN1R2"/>
</dbReference>
<dbReference type="PRINTS" id="PR01537">
    <property type="entry name" value="INTRLKN1R1F"/>
</dbReference>
<dbReference type="SMART" id="SM00409">
    <property type="entry name" value="IG"/>
    <property type="match status" value="3"/>
</dbReference>
<dbReference type="SMART" id="SM00408">
    <property type="entry name" value="IGc2"/>
    <property type="match status" value="2"/>
</dbReference>
<dbReference type="SMART" id="SM00255">
    <property type="entry name" value="TIR"/>
    <property type="match status" value="1"/>
</dbReference>
<dbReference type="SUPFAM" id="SSF48726">
    <property type="entry name" value="Immunoglobulin"/>
    <property type="match status" value="3"/>
</dbReference>
<dbReference type="SUPFAM" id="SSF52200">
    <property type="entry name" value="Toll/Interleukin receptor TIR domain"/>
    <property type="match status" value="1"/>
</dbReference>
<dbReference type="PROSITE" id="PS50835">
    <property type="entry name" value="IG_LIKE"/>
    <property type="match status" value="3"/>
</dbReference>
<dbReference type="PROSITE" id="PS50104">
    <property type="entry name" value="TIR"/>
    <property type="match status" value="1"/>
</dbReference>
<keyword id="KW-0025">Alternative splicing</keyword>
<keyword id="KW-1015">Disulfide bond</keyword>
<keyword id="KW-0325">Glycoprotein</keyword>
<keyword id="KW-0378">Hydrolase</keyword>
<keyword id="KW-0393">Immunoglobulin domain</keyword>
<keyword id="KW-0472">Membrane</keyword>
<keyword id="KW-0520">NAD</keyword>
<keyword id="KW-0675">Receptor</keyword>
<keyword id="KW-1185">Reference proteome</keyword>
<keyword id="KW-0677">Repeat</keyword>
<keyword id="KW-0732">Signal</keyword>
<keyword id="KW-0812">Transmembrane</keyword>
<keyword id="KW-1133">Transmembrane helix</keyword>
<name>IRPL2_MOUSE</name>
<protein>
    <recommendedName>
        <fullName>X-linked interleukin-1 receptor accessory protein-like 2</fullName>
        <shortName>IL-1 receptor accessory protein-like 2</shortName>
        <shortName>IL-1-RAPL-2</shortName>
        <shortName>IL-1RAPL-2</shortName>
        <shortName>IL1RAPL-2</shortName>
        <ecNumber evidence="3">3.2.2.6</ecNumber>
    </recommendedName>
    <alternativeName>
        <fullName>IL1RAPL-2-related protein</fullName>
    </alternativeName>
    <alternativeName>
        <fullName>Three immunoglobulin domain-containing IL-1 receptor-related 1</fullName>
        <shortName>TIGIRR-1</shortName>
    </alternativeName>
</protein>
<sequence>MKLPLLLALVVCSAVSTNLKMVSKRNSVDGCIDWSVDLKTYMALAGEPVRVKCALFYSYIRTNYSMAQSTGLRLMWYRNKGDLEEPIIFSEVRMSKEEDAIWFHSAEEQDSGFYTCVLRNSTYCMKVSMSLTVAENESGLCYNSRIRYLEKSEVTKRKEISCPDMDDFKKSDQEPDVVWYKECKPKMWRSIIIQKGNALLIQEVQEEDGGNYTCELKYEGKLVRRTTELKVTALLTDKPPKPLFPMENQPSVIDVQLGKPLNIPCKAFFGFSGESGPMIYWMKGEKFIEELAGHIREGEIRLLKEHLGEKEVELTLIFDSVVEADLANYTCHVENRNGRKHASVLLRKKDLIYKIELAGGLGAIFLLLILLLVVYKCYNIELMLFYRQRFGGDETTDDNKEYDAYLSYTKVDQDTLDCDNTEEEQFALEILPDVLEKHYGYKLFIPERDLIPSGTYIEDLTRCVEQSRRLIIVLTPDYILRRGWSIFELESRLHNMLVSGEIKVILIECTELKGKVNCQEVESLKHNIKLLSLIKWKGPKSSKLNSKFWKHLVYEMPIKKKEMLSHCHVLDSAEQGLFGELQPIPSIAMTSTSATMVPSQADLPEFHHSDSMQMRHCCRGYQHEMPANTLSVPSLGNHHTYCNLPLTLLNGQLPLNNSLKETEEFSRNNPLLPLTSKELSFTSDIW</sequence>
<gene>
    <name type="primary">Il1rapl2</name>
</gene>
<proteinExistence type="evidence at transcript level"/>